<feature type="chain" id="PRO_1000073184" description="Type III pantothenate kinase">
    <location>
        <begin position="1"/>
        <end position="252"/>
    </location>
</feature>
<feature type="active site" description="Proton acceptor" evidence="1">
    <location>
        <position position="106"/>
    </location>
</feature>
<feature type="binding site" evidence="1">
    <location>
        <begin position="6"/>
        <end position="13"/>
    </location>
    <ligand>
        <name>ATP</name>
        <dbReference type="ChEBI" id="CHEBI:30616"/>
    </ligand>
</feature>
<feature type="binding site" evidence="1">
    <location>
        <begin position="104"/>
        <end position="107"/>
    </location>
    <ligand>
        <name>substrate</name>
    </ligand>
</feature>
<feature type="binding site" evidence="1">
    <location>
        <position position="126"/>
    </location>
    <ligand>
        <name>K(+)</name>
        <dbReference type="ChEBI" id="CHEBI:29103"/>
    </ligand>
</feature>
<feature type="binding site" evidence="1">
    <location>
        <position position="129"/>
    </location>
    <ligand>
        <name>ATP</name>
        <dbReference type="ChEBI" id="CHEBI:30616"/>
    </ligand>
</feature>
<feature type="binding site" evidence="1">
    <location>
        <position position="180"/>
    </location>
    <ligand>
        <name>substrate</name>
    </ligand>
</feature>
<accession>A7HM80</accession>
<keyword id="KW-0067">ATP-binding</keyword>
<keyword id="KW-0173">Coenzyme A biosynthesis</keyword>
<keyword id="KW-0963">Cytoplasm</keyword>
<keyword id="KW-0418">Kinase</keyword>
<keyword id="KW-0479">Metal-binding</keyword>
<keyword id="KW-0547">Nucleotide-binding</keyword>
<keyword id="KW-0630">Potassium</keyword>
<keyword id="KW-1185">Reference proteome</keyword>
<keyword id="KW-0808">Transferase</keyword>
<name>COAX_FERNB</name>
<comment type="function">
    <text evidence="1">Catalyzes the phosphorylation of pantothenate (Pan), the first step in CoA biosynthesis.</text>
</comment>
<comment type="catalytic activity">
    <reaction evidence="1">
        <text>(R)-pantothenate + ATP = (R)-4'-phosphopantothenate + ADP + H(+)</text>
        <dbReference type="Rhea" id="RHEA:16373"/>
        <dbReference type="ChEBI" id="CHEBI:10986"/>
        <dbReference type="ChEBI" id="CHEBI:15378"/>
        <dbReference type="ChEBI" id="CHEBI:29032"/>
        <dbReference type="ChEBI" id="CHEBI:30616"/>
        <dbReference type="ChEBI" id="CHEBI:456216"/>
        <dbReference type="EC" id="2.7.1.33"/>
    </reaction>
</comment>
<comment type="cofactor">
    <cofactor evidence="1">
        <name>NH4(+)</name>
        <dbReference type="ChEBI" id="CHEBI:28938"/>
    </cofactor>
    <cofactor evidence="1">
        <name>K(+)</name>
        <dbReference type="ChEBI" id="CHEBI:29103"/>
    </cofactor>
    <text evidence="1">A monovalent cation. Ammonium or potassium.</text>
</comment>
<comment type="pathway">
    <text evidence="1">Cofactor biosynthesis; coenzyme A biosynthesis; CoA from (R)-pantothenate: step 1/5.</text>
</comment>
<comment type="subunit">
    <text evidence="1">Homodimer.</text>
</comment>
<comment type="subcellular location">
    <subcellularLocation>
        <location evidence="1">Cytoplasm</location>
    </subcellularLocation>
</comment>
<comment type="similarity">
    <text evidence="1">Belongs to the type III pantothenate kinase family.</text>
</comment>
<dbReference type="EC" id="2.7.1.33" evidence="1"/>
<dbReference type="EMBL" id="CP000771">
    <property type="protein sequence ID" value="ABS61013.1"/>
    <property type="molecule type" value="Genomic_DNA"/>
</dbReference>
<dbReference type="RefSeq" id="WP_011994325.1">
    <property type="nucleotide sequence ID" value="NC_009718.1"/>
</dbReference>
<dbReference type="SMR" id="A7HM80"/>
<dbReference type="STRING" id="381764.Fnod_1166"/>
<dbReference type="KEGG" id="fno:Fnod_1166"/>
<dbReference type="eggNOG" id="COG1521">
    <property type="taxonomic scope" value="Bacteria"/>
</dbReference>
<dbReference type="HOGENOM" id="CLU_066627_1_1_0"/>
<dbReference type="OrthoDB" id="9804707at2"/>
<dbReference type="UniPathway" id="UPA00241">
    <property type="reaction ID" value="UER00352"/>
</dbReference>
<dbReference type="Proteomes" id="UP000002415">
    <property type="component" value="Chromosome"/>
</dbReference>
<dbReference type="GO" id="GO:0005737">
    <property type="term" value="C:cytoplasm"/>
    <property type="evidence" value="ECO:0007669"/>
    <property type="project" value="UniProtKB-SubCell"/>
</dbReference>
<dbReference type="GO" id="GO:0005524">
    <property type="term" value="F:ATP binding"/>
    <property type="evidence" value="ECO:0007669"/>
    <property type="project" value="UniProtKB-UniRule"/>
</dbReference>
<dbReference type="GO" id="GO:0046872">
    <property type="term" value="F:metal ion binding"/>
    <property type="evidence" value="ECO:0007669"/>
    <property type="project" value="UniProtKB-KW"/>
</dbReference>
<dbReference type="GO" id="GO:0004594">
    <property type="term" value="F:pantothenate kinase activity"/>
    <property type="evidence" value="ECO:0007669"/>
    <property type="project" value="UniProtKB-UniRule"/>
</dbReference>
<dbReference type="GO" id="GO:0015937">
    <property type="term" value="P:coenzyme A biosynthetic process"/>
    <property type="evidence" value="ECO:0007669"/>
    <property type="project" value="UniProtKB-UniRule"/>
</dbReference>
<dbReference type="CDD" id="cd24015">
    <property type="entry name" value="ASKHA_NBD_PanK-III"/>
    <property type="match status" value="1"/>
</dbReference>
<dbReference type="Gene3D" id="3.30.420.40">
    <property type="match status" value="2"/>
</dbReference>
<dbReference type="HAMAP" id="MF_01274">
    <property type="entry name" value="Pantothen_kinase_3"/>
    <property type="match status" value="1"/>
</dbReference>
<dbReference type="InterPro" id="IPR043129">
    <property type="entry name" value="ATPase_NBD"/>
</dbReference>
<dbReference type="InterPro" id="IPR004619">
    <property type="entry name" value="Type_III_PanK"/>
</dbReference>
<dbReference type="NCBIfam" id="TIGR00671">
    <property type="entry name" value="baf"/>
    <property type="match status" value="1"/>
</dbReference>
<dbReference type="NCBIfam" id="NF009848">
    <property type="entry name" value="PRK13318.1-6"/>
    <property type="match status" value="1"/>
</dbReference>
<dbReference type="PANTHER" id="PTHR34265">
    <property type="entry name" value="TYPE III PANTOTHENATE KINASE"/>
    <property type="match status" value="1"/>
</dbReference>
<dbReference type="PANTHER" id="PTHR34265:SF1">
    <property type="entry name" value="TYPE III PANTOTHENATE KINASE"/>
    <property type="match status" value="1"/>
</dbReference>
<dbReference type="Pfam" id="PF03309">
    <property type="entry name" value="Pan_kinase"/>
    <property type="match status" value="1"/>
</dbReference>
<dbReference type="SUPFAM" id="SSF53067">
    <property type="entry name" value="Actin-like ATPase domain"/>
    <property type="match status" value="2"/>
</dbReference>
<evidence type="ECO:0000255" key="1">
    <source>
        <dbReference type="HAMAP-Rule" id="MF_01274"/>
    </source>
</evidence>
<gene>
    <name evidence="1" type="primary">coaX</name>
    <name type="ordered locus">Fnod_1166</name>
</gene>
<sequence length="252" mass="28119">MLLLFDVGNTHTTVALTRDGKMFEKYRISTKKYETEDELYVFLKSLYGGTVIEGIATVVSSVVPSLNIVFEYFANKYGDGNVYFVSSTDYNKIVWNINYPKELGADRVCDVIAAYKEYGKDCIIIDYGTAITIDVLKDGVYEGGVIMPGFAMMINALFKGTAKLPLVEVKPYDGFIGKDTESNIRIGTINATVGAIKYVVENITKEYNTPPVIIHTGGHALYVQKIVDGVVDRDLTLRGMYYFYEEKKNSAC</sequence>
<protein>
    <recommendedName>
        <fullName evidence="1">Type III pantothenate kinase</fullName>
        <ecNumber evidence="1">2.7.1.33</ecNumber>
    </recommendedName>
    <alternativeName>
        <fullName evidence="1">PanK-III</fullName>
    </alternativeName>
    <alternativeName>
        <fullName evidence="1">Pantothenic acid kinase</fullName>
    </alternativeName>
</protein>
<proteinExistence type="inferred from homology"/>
<reference key="1">
    <citation type="submission" date="2007-07" db="EMBL/GenBank/DDBJ databases">
        <title>Complete sequence of Fervidobacterium nodosum Rt17-B1.</title>
        <authorList>
            <consortium name="US DOE Joint Genome Institute"/>
            <person name="Copeland A."/>
            <person name="Lucas S."/>
            <person name="Lapidus A."/>
            <person name="Barry K."/>
            <person name="Glavina del Rio T."/>
            <person name="Dalin E."/>
            <person name="Tice H."/>
            <person name="Pitluck S."/>
            <person name="Saunders E."/>
            <person name="Brettin T."/>
            <person name="Bruce D."/>
            <person name="Detter J.C."/>
            <person name="Han C."/>
            <person name="Schmutz J."/>
            <person name="Larimer F."/>
            <person name="Land M."/>
            <person name="Hauser L."/>
            <person name="Kyrpides N."/>
            <person name="Mikhailova N."/>
            <person name="Nelson K."/>
            <person name="Gogarten J.P."/>
            <person name="Noll K."/>
            <person name="Richardson P."/>
        </authorList>
    </citation>
    <scope>NUCLEOTIDE SEQUENCE [LARGE SCALE GENOMIC DNA]</scope>
    <source>
        <strain>ATCC 35602 / DSM 5306 / Rt17-B1</strain>
    </source>
</reference>
<organism>
    <name type="scientific">Fervidobacterium nodosum (strain ATCC 35602 / DSM 5306 / Rt17-B1)</name>
    <dbReference type="NCBI Taxonomy" id="381764"/>
    <lineage>
        <taxon>Bacteria</taxon>
        <taxon>Thermotogati</taxon>
        <taxon>Thermotogota</taxon>
        <taxon>Thermotogae</taxon>
        <taxon>Thermotogales</taxon>
        <taxon>Fervidobacteriaceae</taxon>
        <taxon>Fervidobacterium</taxon>
    </lineage>
</organism>